<organism>
    <name type="scientific">Corynebacterium efficiens (strain DSM 44549 / YS-314 / AJ 12310 / JCM 11189 / NBRC 100395)</name>
    <dbReference type="NCBI Taxonomy" id="196164"/>
    <lineage>
        <taxon>Bacteria</taxon>
        <taxon>Bacillati</taxon>
        <taxon>Actinomycetota</taxon>
        <taxon>Actinomycetes</taxon>
        <taxon>Mycobacteriales</taxon>
        <taxon>Corynebacteriaceae</taxon>
        <taxon>Corynebacterium</taxon>
    </lineage>
</organism>
<protein>
    <recommendedName>
        <fullName evidence="1">Alanine racemase</fullName>
        <ecNumber evidence="1">5.1.1.1</ecNumber>
    </recommendedName>
</protein>
<gene>
    <name type="primary">alr</name>
    <name type="ordered locus">CE0593</name>
</gene>
<feature type="chain" id="PRO_1000065983" description="Alanine racemase">
    <location>
        <begin position="1"/>
        <end position="367"/>
    </location>
</feature>
<feature type="active site" description="Proton acceptor; specific for D-alanine" evidence="1">
    <location>
        <position position="34"/>
    </location>
</feature>
<feature type="active site" description="Proton acceptor; specific for L-alanine" evidence="1">
    <location>
        <position position="258"/>
    </location>
</feature>
<feature type="binding site" evidence="1">
    <location>
        <position position="131"/>
    </location>
    <ligand>
        <name>substrate</name>
    </ligand>
</feature>
<feature type="binding site" evidence="1">
    <location>
        <position position="306"/>
    </location>
    <ligand>
        <name>substrate</name>
    </ligand>
</feature>
<feature type="modified residue" description="N6-(pyridoxal phosphate)lysine" evidence="1">
    <location>
        <position position="34"/>
    </location>
</feature>
<name>ALR_COREF</name>
<dbReference type="EC" id="5.1.1.1" evidence="1"/>
<dbReference type="EMBL" id="BA000035">
    <property type="protein sequence ID" value="BAC17403.1"/>
    <property type="molecule type" value="Genomic_DNA"/>
</dbReference>
<dbReference type="RefSeq" id="WP_006769730.1">
    <property type="nucleotide sequence ID" value="NC_004369.1"/>
</dbReference>
<dbReference type="SMR" id="Q8FS13"/>
<dbReference type="STRING" id="196164.gene:10740995"/>
<dbReference type="KEGG" id="cef:CE0593"/>
<dbReference type="eggNOG" id="COG0787">
    <property type="taxonomic scope" value="Bacteria"/>
</dbReference>
<dbReference type="HOGENOM" id="CLU_028393_0_0_11"/>
<dbReference type="OrthoDB" id="9813814at2"/>
<dbReference type="UniPathway" id="UPA00042">
    <property type="reaction ID" value="UER00497"/>
</dbReference>
<dbReference type="Proteomes" id="UP000001409">
    <property type="component" value="Chromosome"/>
</dbReference>
<dbReference type="GO" id="GO:0005829">
    <property type="term" value="C:cytosol"/>
    <property type="evidence" value="ECO:0007669"/>
    <property type="project" value="TreeGrafter"/>
</dbReference>
<dbReference type="GO" id="GO:0008784">
    <property type="term" value="F:alanine racemase activity"/>
    <property type="evidence" value="ECO:0007669"/>
    <property type="project" value="UniProtKB-UniRule"/>
</dbReference>
<dbReference type="GO" id="GO:0030170">
    <property type="term" value="F:pyridoxal phosphate binding"/>
    <property type="evidence" value="ECO:0007669"/>
    <property type="project" value="UniProtKB-UniRule"/>
</dbReference>
<dbReference type="GO" id="GO:0030632">
    <property type="term" value="P:D-alanine biosynthetic process"/>
    <property type="evidence" value="ECO:0007669"/>
    <property type="project" value="UniProtKB-UniRule"/>
</dbReference>
<dbReference type="GO" id="GO:0009252">
    <property type="term" value="P:peptidoglycan biosynthetic process"/>
    <property type="evidence" value="ECO:0007669"/>
    <property type="project" value="TreeGrafter"/>
</dbReference>
<dbReference type="CDD" id="cd00430">
    <property type="entry name" value="PLPDE_III_AR"/>
    <property type="match status" value="1"/>
</dbReference>
<dbReference type="FunFam" id="3.20.20.10:FF:000002">
    <property type="entry name" value="Alanine racemase"/>
    <property type="match status" value="1"/>
</dbReference>
<dbReference type="Gene3D" id="3.20.20.10">
    <property type="entry name" value="Alanine racemase"/>
    <property type="match status" value="1"/>
</dbReference>
<dbReference type="Gene3D" id="2.40.37.10">
    <property type="entry name" value="Lyase, Ornithine Decarboxylase, Chain A, domain 1"/>
    <property type="match status" value="1"/>
</dbReference>
<dbReference type="HAMAP" id="MF_01201">
    <property type="entry name" value="Ala_racemase"/>
    <property type="match status" value="1"/>
</dbReference>
<dbReference type="InterPro" id="IPR000821">
    <property type="entry name" value="Ala_racemase"/>
</dbReference>
<dbReference type="InterPro" id="IPR009006">
    <property type="entry name" value="Ala_racemase/Decarboxylase_C"/>
</dbReference>
<dbReference type="InterPro" id="IPR011079">
    <property type="entry name" value="Ala_racemase_C"/>
</dbReference>
<dbReference type="InterPro" id="IPR001608">
    <property type="entry name" value="Ala_racemase_N"/>
</dbReference>
<dbReference type="InterPro" id="IPR029066">
    <property type="entry name" value="PLP-binding_barrel"/>
</dbReference>
<dbReference type="NCBIfam" id="TIGR00492">
    <property type="entry name" value="alr"/>
    <property type="match status" value="1"/>
</dbReference>
<dbReference type="PANTHER" id="PTHR30511">
    <property type="entry name" value="ALANINE RACEMASE"/>
    <property type="match status" value="1"/>
</dbReference>
<dbReference type="PANTHER" id="PTHR30511:SF0">
    <property type="entry name" value="ALANINE RACEMASE, CATABOLIC-RELATED"/>
    <property type="match status" value="1"/>
</dbReference>
<dbReference type="Pfam" id="PF00842">
    <property type="entry name" value="Ala_racemase_C"/>
    <property type="match status" value="1"/>
</dbReference>
<dbReference type="Pfam" id="PF01168">
    <property type="entry name" value="Ala_racemase_N"/>
    <property type="match status" value="1"/>
</dbReference>
<dbReference type="PRINTS" id="PR00992">
    <property type="entry name" value="ALARACEMASE"/>
</dbReference>
<dbReference type="SMART" id="SM01005">
    <property type="entry name" value="Ala_racemase_C"/>
    <property type="match status" value="1"/>
</dbReference>
<dbReference type="SUPFAM" id="SSF50621">
    <property type="entry name" value="Alanine racemase C-terminal domain-like"/>
    <property type="match status" value="1"/>
</dbReference>
<dbReference type="SUPFAM" id="SSF51419">
    <property type="entry name" value="PLP-binding barrel"/>
    <property type="match status" value="1"/>
</dbReference>
<sequence length="367" mass="39352">MNLLTTRIDLDAIAHNTRLLKNRVGAAKLMAVVKADGYNHGMDRVAPVMAANGADAFGVATIAEALALRATGITTPILCWIWSPEQDWAAAVEAGIDLAVISPRHARVLVDAPPTSRAIRVSVKVDTALHRSGVDEQDWDAVFTLLRDCGHIEVTGLFTHLSCADEPGNPETDHQAETFRRAIDRARALGLEVPENHLCNSPATLTRPDLHMDMVRPGVALYGLEPIPGLDHGLRPAMTWAGAITVVKPIRKGEGTSYGLTWRAEADGFVAVVPAGYADGVPRAAQDHLRVHVNGHDYPQVGRVCMDQFVIFLGDNPHGVTAGDEAVIFGGTGMSATELADALATINYEVICRPTGRTVRDYTGEGK</sequence>
<keyword id="KW-0413">Isomerase</keyword>
<keyword id="KW-0663">Pyridoxal phosphate</keyword>
<keyword id="KW-1185">Reference proteome</keyword>
<reference key="1">
    <citation type="journal article" date="2003" name="Genome Res.">
        <title>Comparative complete genome sequence analysis of the amino acid replacements responsible for the thermostability of Corynebacterium efficiens.</title>
        <authorList>
            <person name="Nishio Y."/>
            <person name="Nakamura Y."/>
            <person name="Kawarabayasi Y."/>
            <person name="Usuda Y."/>
            <person name="Kimura E."/>
            <person name="Sugimoto S."/>
            <person name="Matsui K."/>
            <person name="Yamagishi A."/>
            <person name="Kikuchi H."/>
            <person name="Ikeo K."/>
            <person name="Gojobori T."/>
        </authorList>
    </citation>
    <scope>NUCLEOTIDE SEQUENCE [LARGE SCALE GENOMIC DNA]</scope>
    <source>
        <strain>DSM 44549 / YS-314 / AJ 12310 / JCM 11189 / NBRC 100395</strain>
    </source>
</reference>
<evidence type="ECO:0000255" key="1">
    <source>
        <dbReference type="HAMAP-Rule" id="MF_01201"/>
    </source>
</evidence>
<comment type="function">
    <text evidence="1">Catalyzes the interconversion of L-alanine and D-alanine. May also act on other amino acids.</text>
</comment>
<comment type="catalytic activity">
    <reaction evidence="1">
        <text>L-alanine = D-alanine</text>
        <dbReference type="Rhea" id="RHEA:20249"/>
        <dbReference type="ChEBI" id="CHEBI:57416"/>
        <dbReference type="ChEBI" id="CHEBI:57972"/>
        <dbReference type="EC" id="5.1.1.1"/>
    </reaction>
</comment>
<comment type="cofactor">
    <cofactor evidence="1">
        <name>pyridoxal 5'-phosphate</name>
        <dbReference type="ChEBI" id="CHEBI:597326"/>
    </cofactor>
</comment>
<comment type="pathway">
    <text evidence="1">Amino-acid biosynthesis; D-alanine biosynthesis; D-alanine from L-alanine: step 1/1.</text>
</comment>
<comment type="similarity">
    <text evidence="1">Belongs to the alanine racemase family.</text>
</comment>
<proteinExistence type="inferred from homology"/>
<accession>Q8FS13</accession>